<dbReference type="EC" id="6.3.4.-" evidence="1"/>
<dbReference type="EMBL" id="CP000033">
    <property type="protein sequence ID" value="AAV43346.1"/>
    <property type="molecule type" value="Genomic_DNA"/>
</dbReference>
<dbReference type="RefSeq" id="WP_003548309.1">
    <property type="nucleotide sequence ID" value="NC_006814.3"/>
</dbReference>
<dbReference type="RefSeq" id="YP_194377.1">
    <property type="nucleotide sequence ID" value="NC_006814.3"/>
</dbReference>
<dbReference type="SMR" id="Q5FIX8"/>
<dbReference type="STRING" id="272621.LBA1527"/>
<dbReference type="KEGG" id="lac:LBA1527"/>
<dbReference type="PATRIC" id="fig|272621.13.peg.1451"/>
<dbReference type="eggNOG" id="COG1323">
    <property type="taxonomic scope" value="Bacteria"/>
</dbReference>
<dbReference type="HOGENOM" id="CLU_038915_0_2_9"/>
<dbReference type="OrthoDB" id="9769796at2"/>
<dbReference type="BioCyc" id="LACI272621:G1G49-1495-MONOMER"/>
<dbReference type="Proteomes" id="UP000006381">
    <property type="component" value="Chromosome"/>
</dbReference>
<dbReference type="GO" id="GO:0005737">
    <property type="term" value="C:cytoplasm"/>
    <property type="evidence" value="ECO:0007669"/>
    <property type="project" value="UniProtKB-SubCell"/>
</dbReference>
<dbReference type="GO" id="GO:0005524">
    <property type="term" value="F:ATP binding"/>
    <property type="evidence" value="ECO:0007669"/>
    <property type="project" value="UniProtKB-KW"/>
</dbReference>
<dbReference type="GO" id="GO:0016879">
    <property type="term" value="F:ligase activity, forming carbon-nitrogen bonds"/>
    <property type="evidence" value="ECO:0007669"/>
    <property type="project" value="UniProtKB-UniRule"/>
</dbReference>
<dbReference type="GO" id="GO:0000049">
    <property type="term" value="F:tRNA binding"/>
    <property type="evidence" value="ECO:0007669"/>
    <property type="project" value="UniProtKB-KW"/>
</dbReference>
<dbReference type="GO" id="GO:0006400">
    <property type="term" value="P:tRNA modification"/>
    <property type="evidence" value="ECO:0007669"/>
    <property type="project" value="UniProtKB-UniRule"/>
</dbReference>
<dbReference type="Gene3D" id="3.40.50.620">
    <property type="entry name" value="HUPs"/>
    <property type="match status" value="1"/>
</dbReference>
<dbReference type="HAMAP" id="MF_01539">
    <property type="entry name" value="TmcAL"/>
    <property type="match status" value="1"/>
</dbReference>
<dbReference type="InterPro" id="IPR014729">
    <property type="entry name" value="Rossmann-like_a/b/a_fold"/>
</dbReference>
<dbReference type="InterPro" id="IPR008513">
    <property type="entry name" value="tRNA(Met)_cyd_acetate_ligase"/>
</dbReference>
<dbReference type="NCBIfam" id="NF010191">
    <property type="entry name" value="PRK13670.1"/>
    <property type="match status" value="1"/>
</dbReference>
<dbReference type="PANTHER" id="PTHR37825">
    <property type="entry name" value="TRNA(MET) CYTIDINE ACETATE LIGASE"/>
    <property type="match status" value="1"/>
</dbReference>
<dbReference type="PANTHER" id="PTHR37825:SF1">
    <property type="entry name" value="TRNA(MET) CYTIDINE ACETATE LIGASE"/>
    <property type="match status" value="1"/>
</dbReference>
<dbReference type="Pfam" id="PF05636">
    <property type="entry name" value="HIGH_NTase1"/>
    <property type="match status" value="1"/>
</dbReference>
<dbReference type="SUPFAM" id="SSF52374">
    <property type="entry name" value="Nucleotidylyl transferase"/>
    <property type="match status" value="1"/>
</dbReference>
<comment type="function">
    <text evidence="1">Catalyzes the formation of N(4)-acetylcytidine (ac(4)C) at the wobble position of elongator tRNA(Met), using acetate and ATP as substrates. First activates an acetate ion to form acetyladenylate (Ac-AMP) and then transfers the acetyl group to tRNA to form ac(4)C34.</text>
</comment>
<comment type="catalytic activity">
    <reaction evidence="1">
        <text>cytidine(34) in elongator tRNA(Met) + acetate + ATP = N(4)-acetylcytidine(34) in elongator tRNA(Met) + AMP + diphosphate</text>
        <dbReference type="Rhea" id="RHEA:58144"/>
        <dbReference type="Rhea" id="RHEA-COMP:10693"/>
        <dbReference type="Rhea" id="RHEA-COMP:10694"/>
        <dbReference type="ChEBI" id="CHEBI:30089"/>
        <dbReference type="ChEBI" id="CHEBI:30616"/>
        <dbReference type="ChEBI" id="CHEBI:33019"/>
        <dbReference type="ChEBI" id="CHEBI:74900"/>
        <dbReference type="ChEBI" id="CHEBI:82748"/>
        <dbReference type="ChEBI" id="CHEBI:456215"/>
    </reaction>
</comment>
<comment type="subcellular location">
    <subcellularLocation>
        <location evidence="1">Cytoplasm</location>
    </subcellularLocation>
</comment>
<comment type="similarity">
    <text evidence="1">Belongs to the TmcAL family.</text>
</comment>
<sequence>MSAVGIIAEFNPLHSGHEFLLNQARLIAKKDPIVVLMSGNYVQRGEMAIMSKWDRAKAALQSGADLVFETPFSTAVEPADLFSLGNIDQLAKLGVTDLVFGVEDANLNFAYLGSRIAEIPQNHMDFKDYSQTYSTQYNQMVAHEVGHEINQPNAILGLAYAVANHNLGSPLKLHPVNRIGAGHDDILQRSGVVQSASAIRNLLLHGEDTSNLKYWMPKNEANILAKQKVYPNWNLLYPFLKYRIESSSIEDLRRIYQMSEGLEYKMKQEIHLARDFTEFLRRIKSKRYTYARLRRLSLYTLLNVTYDDMLDSFNHESLMLLGFSKKGRQYLKQNRKNIQTEIISKVDKRSAKSGSLALQVRTDRLFEQVMGVDQNFGQRPIEV</sequence>
<reference key="1">
    <citation type="journal article" date="2005" name="Proc. Natl. Acad. Sci. U.S.A.">
        <title>Complete genome sequence of the probiotic lactic acid bacterium Lactobacillus acidophilus NCFM.</title>
        <authorList>
            <person name="Altermann E."/>
            <person name="Russell W.M."/>
            <person name="Azcarate-Peril M.A."/>
            <person name="Barrangou R."/>
            <person name="Buck B.L."/>
            <person name="McAuliffe O."/>
            <person name="Souther N."/>
            <person name="Dobson A."/>
            <person name="Duong T."/>
            <person name="Callanan M."/>
            <person name="Lick S."/>
            <person name="Hamrick A."/>
            <person name="Cano R."/>
            <person name="Klaenhammer T.R."/>
        </authorList>
    </citation>
    <scope>NUCLEOTIDE SEQUENCE [LARGE SCALE GENOMIC DNA]</scope>
    <source>
        <strain>ATCC 700396 / NCK56 / N2 / NCFM</strain>
    </source>
</reference>
<keyword id="KW-0067">ATP-binding</keyword>
<keyword id="KW-0963">Cytoplasm</keyword>
<keyword id="KW-0436">Ligase</keyword>
<keyword id="KW-0547">Nucleotide-binding</keyword>
<keyword id="KW-1185">Reference proteome</keyword>
<keyword id="KW-0694">RNA-binding</keyword>
<keyword id="KW-0819">tRNA processing</keyword>
<keyword id="KW-0820">tRNA-binding</keyword>
<protein>
    <recommendedName>
        <fullName evidence="1">tRNA(Met) cytidine acetate ligase</fullName>
        <ecNumber evidence="1">6.3.4.-</ecNumber>
    </recommendedName>
</protein>
<feature type="chain" id="PRO_0000147167" description="tRNA(Met) cytidine acetate ligase">
    <location>
        <begin position="1"/>
        <end position="383"/>
    </location>
</feature>
<feature type="binding site" evidence="1">
    <location>
        <begin position="7"/>
        <end position="20"/>
    </location>
    <ligand>
        <name>ATP</name>
        <dbReference type="ChEBI" id="CHEBI:30616"/>
    </ligand>
</feature>
<feature type="binding site" evidence="1">
    <location>
        <position position="101"/>
    </location>
    <ligand>
        <name>ATP</name>
        <dbReference type="ChEBI" id="CHEBI:30616"/>
    </ligand>
</feature>
<feature type="binding site" evidence="1">
    <location>
        <position position="153"/>
    </location>
    <ligand>
        <name>ATP</name>
        <dbReference type="ChEBI" id="CHEBI:30616"/>
    </ligand>
</feature>
<feature type="binding site" evidence="1">
    <location>
        <begin position="178"/>
        <end position="179"/>
    </location>
    <ligand>
        <name>ATP</name>
        <dbReference type="ChEBI" id="CHEBI:30616"/>
    </ligand>
</feature>
<evidence type="ECO:0000255" key="1">
    <source>
        <dbReference type="HAMAP-Rule" id="MF_01539"/>
    </source>
</evidence>
<proteinExistence type="inferred from homology"/>
<organism>
    <name type="scientific">Lactobacillus acidophilus (strain ATCC 700396 / NCK56 / N2 / NCFM)</name>
    <dbReference type="NCBI Taxonomy" id="272621"/>
    <lineage>
        <taxon>Bacteria</taxon>
        <taxon>Bacillati</taxon>
        <taxon>Bacillota</taxon>
        <taxon>Bacilli</taxon>
        <taxon>Lactobacillales</taxon>
        <taxon>Lactobacillaceae</taxon>
        <taxon>Lactobacillus</taxon>
    </lineage>
</organism>
<name>TMCAL_LACAC</name>
<accession>Q5FIX8</accession>
<gene>
    <name evidence="1" type="primary">tmcAL</name>
    <name type="ordered locus">LBA1527</name>
</gene>